<organism>
    <name type="scientific">Acinetobacter baumannii (strain SDF)</name>
    <dbReference type="NCBI Taxonomy" id="509170"/>
    <lineage>
        <taxon>Bacteria</taxon>
        <taxon>Pseudomonadati</taxon>
        <taxon>Pseudomonadota</taxon>
        <taxon>Gammaproteobacteria</taxon>
        <taxon>Moraxellales</taxon>
        <taxon>Moraxellaceae</taxon>
        <taxon>Acinetobacter</taxon>
        <taxon>Acinetobacter calcoaceticus/baumannii complex</taxon>
    </lineage>
</organism>
<dbReference type="EC" id="4.2.1.19" evidence="1"/>
<dbReference type="EMBL" id="CU468230">
    <property type="protein sequence ID" value="CAO99640.1"/>
    <property type="molecule type" value="Genomic_DNA"/>
</dbReference>
<dbReference type="SMR" id="B0VPC2"/>
<dbReference type="KEGG" id="abm:ABSDF0242"/>
<dbReference type="HOGENOM" id="CLU_044308_3_0_6"/>
<dbReference type="UniPathway" id="UPA00031">
    <property type="reaction ID" value="UER00011"/>
</dbReference>
<dbReference type="Proteomes" id="UP000001741">
    <property type="component" value="Chromosome"/>
</dbReference>
<dbReference type="GO" id="GO:0005737">
    <property type="term" value="C:cytoplasm"/>
    <property type="evidence" value="ECO:0007669"/>
    <property type="project" value="UniProtKB-SubCell"/>
</dbReference>
<dbReference type="GO" id="GO:0004424">
    <property type="term" value="F:imidazoleglycerol-phosphate dehydratase activity"/>
    <property type="evidence" value="ECO:0007669"/>
    <property type="project" value="UniProtKB-UniRule"/>
</dbReference>
<dbReference type="GO" id="GO:0000105">
    <property type="term" value="P:L-histidine biosynthetic process"/>
    <property type="evidence" value="ECO:0007669"/>
    <property type="project" value="UniProtKB-UniRule"/>
</dbReference>
<dbReference type="CDD" id="cd07914">
    <property type="entry name" value="IGPD"/>
    <property type="match status" value="1"/>
</dbReference>
<dbReference type="FunFam" id="3.30.230.40:FF:000002">
    <property type="entry name" value="Imidazoleglycerol-phosphate dehydratase"/>
    <property type="match status" value="1"/>
</dbReference>
<dbReference type="FunFam" id="3.30.230.40:FF:000003">
    <property type="entry name" value="Imidazoleglycerol-phosphate dehydratase HisB"/>
    <property type="match status" value="1"/>
</dbReference>
<dbReference type="Gene3D" id="3.30.230.40">
    <property type="entry name" value="Imidazole glycerol phosphate dehydratase, domain 1"/>
    <property type="match status" value="2"/>
</dbReference>
<dbReference type="HAMAP" id="MF_00076">
    <property type="entry name" value="HisB"/>
    <property type="match status" value="1"/>
</dbReference>
<dbReference type="InterPro" id="IPR038494">
    <property type="entry name" value="IGPD_sf"/>
</dbReference>
<dbReference type="InterPro" id="IPR000807">
    <property type="entry name" value="ImidazoleglycerolP_deHydtase"/>
</dbReference>
<dbReference type="InterPro" id="IPR020565">
    <property type="entry name" value="ImidazoleglycerP_deHydtase_CS"/>
</dbReference>
<dbReference type="InterPro" id="IPR020568">
    <property type="entry name" value="Ribosomal_Su5_D2-typ_SF"/>
</dbReference>
<dbReference type="NCBIfam" id="NF002106">
    <property type="entry name" value="PRK00951.1-1"/>
    <property type="match status" value="1"/>
</dbReference>
<dbReference type="NCBIfam" id="NF002109">
    <property type="entry name" value="PRK00951.1-5"/>
    <property type="match status" value="1"/>
</dbReference>
<dbReference type="NCBIfam" id="NF002111">
    <property type="entry name" value="PRK00951.2-1"/>
    <property type="match status" value="1"/>
</dbReference>
<dbReference type="NCBIfam" id="NF002114">
    <property type="entry name" value="PRK00951.2-4"/>
    <property type="match status" value="1"/>
</dbReference>
<dbReference type="PANTHER" id="PTHR23133:SF2">
    <property type="entry name" value="IMIDAZOLEGLYCEROL-PHOSPHATE DEHYDRATASE"/>
    <property type="match status" value="1"/>
</dbReference>
<dbReference type="PANTHER" id="PTHR23133">
    <property type="entry name" value="IMIDAZOLEGLYCEROL-PHOSPHATE DEHYDRATASE HIS7"/>
    <property type="match status" value="1"/>
</dbReference>
<dbReference type="Pfam" id="PF00475">
    <property type="entry name" value="IGPD"/>
    <property type="match status" value="1"/>
</dbReference>
<dbReference type="SUPFAM" id="SSF54211">
    <property type="entry name" value="Ribosomal protein S5 domain 2-like"/>
    <property type="match status" value="2"/>
</dbReference>
<dbReference type="PROSITE" id="PS00954">
    <property type="entry name" value="IGP_DEHYDRATASE_1"/>
    <property type="match status" value="1"/>
</dbReference>
<dbReference type="PROSITE" id="PS00955">
    <property type="entry name" value="IGP_DEHYDRATASE_2"/>
    <property type="match status" value="1"/>
</dbReference>
<proteinExistence type="inferred from homology"/>
<reference key="1">
    <citation type="journal article" date="2008" name="PLoS ONE">
        <title>Comparative analysis of Acinetobacters: three genomes for three lifestyles.</title>
        <authorList>
            <person name="Vallenet D."/>
            <person name="Nordmann P."/>
            <person name="Barbe V."/>
            <person name="Poirel L."/>
            <person name="Mangenot S."/>
            <person name="Bataille E."/>
            <person name="Dossat C."/>
            <person name="Gas S."/>
            <person name="Kreimeyer A."/>
            <person name="Lenoble P."/>
            <person name="Oztas S."/>
            <person name="Poulain J."/>
            <person name="Segurens B."/>
            <person name="Robert C."/>
            <person name="Abergel C."/>
            <person name="Claverie J.-M."/>
            <person name="Raoult D."/>
            <person name="Medigue C."/>
            <person name="Weissenbach J."/>
            <person name="Cruveiller S."/>
        </authorList>
    </citation>
    <scope>NUCLEOTIDE SEQUENCE [LARGE SCALE GENOMIC DNA]</scope>
    <source>
        <strain>SDF</strain>
    </source>
</reference>
<gene>
    <name evidence="1" type="primary">hisB</name>
    <name type="ordered locus">ABSDF0242</name>
</gene>
<comment type="catalytic activity">
    <reaction evidence="1">
        <text>D-erythro-1-(imidazol-4-yl)glycerol 3-phosphate = 3-(imidazol-4-yl)-2-oxopropyl phosphate + H2O</text>
        <dbReference type="Rhea" id="RHEA:11040"/>
        <dbReference type="ChEBI" id="CHEBI:15377"/>
        <dbReference type="ChEBI" id="CHEBI:57766"/>
        <dbReference type="ChEBI" id="CHEBI:58278"/>
        <dbReference type="EC" id="4.2.1.19"/>
    </reaction>
</comment>
<comment type="pathway">
    <text evidence="1">Amino-acid biosynthesis; L-histidine biosynthesis; L-histidine from 5-phospho-alpha-D-ribose 1-diphosphate: step 6/9.</text>
</comment>
<comment type="subcellular location">
    <subcellularLocation>
        <location evidence="1">Cytoplasm</location>
    </subcellularLocation>
</comment>
<comment type="similarity">
    <text evidence="1">Belongs to the imidazoleglycerol-phosphate dehydratase family.</text>
</comment>
<feature type="chain" id="PRO_1000092665" description="Imidazoleglycerol-phosphate dehydratase">
    <location>
        <begin position="1"/>
        <end position="202"/>
    </location>
</feature>
<sequence length="202" mass="22591">MRNVSMTQRISEVVRNTNETKIRVRLNLDGTGQGTLNTGVPFLDHMIDQIKQHGLFDIDIHCDGDLEIDDHHTVEDCGITLGQAFAQALGDKKGLRRYGHFYAPLDEALSRVVVDLSGRPGLFMDIPFTRARIGTFDVDLFSEFFQGFVNHALMTLHIDNLKGKNSHHQIESVFKALARALRMACEIDPRAENTIASTKGSL</sequence>
<accession>B0VPC2</accession>
<name>HIS7_ACIBS</name>
<evidence type="ECO:0000255" key="1">
    <source>
        <dbReference type="HAMAP-Rule" id="MF_00076"/>
    </source>
</evidence>
<protein>
    <recommendedName>
        <fullName evidence="1">Imidazoleglycerol-phosphate dehydratase</fullName>
        <shortName evidence="1">IGPD</shortName>
        <ecNumber evidence="1">4.2.1.19</ecNumber>
    </recommendedName>
</protein>
<keyword id="KW-0028">Amino-acid biosynthesis</keyword>
<keyword id="KW-0963">Cytoplasm</keyword>
<keyword id="KW-0368">Histidine biosynthesis</keyword>
<keyword id="KW-0456">Lyase</keyword>